<evidence type="ECO:0000250" key="1">
    <source>
        <dbReference type="UniProtKB" id="Q2EEY0"/>
    </source>
</evidence>
<evidence type="ECO:0000250" key="2">
    <source>
        <dbReference type="UniProtKB" id="Q9EQU3"/>
    </source>
</evidence>
<evidence type="ECO:0000250" key="3">
    <source>
        <dbReference type="UniProtKB" id="Q9NR96"/>
    </source>
</evidence>
<evidence type="ECO:0000255" key="4"/>
<evidence type="ECO:0000255" key="5">
    <source>
        <dbReference type="PROSITE-ProRule" id="PRU00204"/>
    </source>
</evidence>
<evidence type="ECO:0000305" key="6"/>
<name>TLR9_FELCA</name>
<accession>Q5I2M7</accession>
<accession>Q8HZ52</accession>
<feature type="signal peptide" evidence="4">
    <location>
        <begin position="1"/>
        <end position="25"/>
    </location>
</feature>
<feature type="chain" id="PRO_0000227008" description="Toll-like receptor 9">
    <location>
        <begin position="26"/>
        <end position="1031"/>
    </location>
</feature>
<feature type="topological domain" description="Extracellular" evidence="4">
    <location>
        <begin position="26"/>
        <end position="817"/>
    </location>
</feature>
<feature type="transmembrane region" description="Helical" evidence="4">
    <location>
        <begin position="818"/>
        <end position="838"/>
    </location>
</feature>
<feature type="topological domain" description="Cytoplasmic" evidence="4">
    <location>
        <begin position="839"/>
        <end position="1031"/>
    </location>
</feature>
<feature type="repeat" description="LRR 1">
    <location>
        <begin position="62"/>
        <end position="85"/>
    </location>
</feature>
<feature type="repeat" description="LRR 2">
    <location>
        <begin position="87"/>
        <end position="110"/>
    </location>
</feature>
<feature type="repeat" description="LRR 3">
    <location>
        <begin position="122"/>
        <end position="147"/>
    </location>
</feature>
<feature type="repeat" description="LRR 4">
    <location>
        <begin position="150"/>
        <end position="166"/>
    </location>
</feature>
<feature type="repeat" description="LRR 5">
    <location>
        <begin position="167"/>
        <end position="190"/>
    </location>
</feature>
<feature type="repeat" description="LRR 6">
    <location>
        <begin position="198"/>
        <end position="221"/>
    </location>
</feature>
<feature type="repeat" description="LRR 7">
    <location>
        <begin position="223"/>
        <end position="242"/>
    </location>
</feature>
<feature type="repeat" description="LRR 8">
    <location>
        <begin position="243"/>
        <end position="268"/>
    </location>
</feature>
<feature type="repeat" description="LRR 9">
    <location>
        <begin position="283"/>
        <end position="306"/>
    </location>
</feature>
<feature type="repeat" description="LRR 10">
    <location>
        <begin position="308"/>
        <end position="332"/>
    </location>
</feature>
<feature type="repeat" description="LRR 11">
    <location>
        <begin position="333"/>
        <end position="356"/>
    </location>
</feature>
<feature type="repeat" description="LRR 12">
    <location>
        <begin position="363"/>
        <end position="386"/>
    </location>
</feature>
<feature type="repeat" description="LRR 13">
    <location>
        <begin position="390"/>
        <end position="413"/>
    </location>
</feature>
<feature type="repeat" description="LRR 14">
    <location>
        <begin position="415"/>
        <end position="440"/>
    </location>
</feature>
<feature type="repeat" description="LRR 15">
    <location>
        <begin position="470"/>
        <end position="494"/>
    </location>
</feature>
<feature type="repeat" description="LRR 16">
    <location>
        <begin position="496"/>
        <end position="519"/>
    </location>
</feature>
<feature type="repeat" description="LRR 17">
    <location>
        <begin position="520"/>
        <end position="543"/>
    </location>
</feature>
<feature type="repeat" description="LRR 18">
    <location>
        <begin position="545"/>
        <end position="572"/>
    </location>
</feature>
<feature type="repeat" description="LRR 19">
    <location>
        <begin position="574"/>
        <end position="598"/>
    </location>
</feature>
<feature type="repeat" description="LRR 20">
    <location>
        <begin position="600"/>
        <end position="622"/>
    </location>
</feature>
<feature type="repeat" description="LRR 21">
    <location>
        <begin position="627"/>
        <end position="650"/>
    </location>
</feature>
<feature type="repeat" description="LRR 22">
    <location>
        <begin position="652"/>
        <end position="675"/>
    </location>
</feature>
<feature type="repeat" description="LRR 23">
    <location>
        <begin position="676"/>
        <end position="699"/>
    </location>
</feature>
<feature type="repeat" description="LRR 24">
    <location>
        <begin position="701"/>
        <end position="723"/>
    </location>
</feature>
<feature type="repeat" description="LRR 25">
    <location>
        <begin position="724"/>
        <end position="747"/>
    </location>
</feature>
<feature type="repeat" description="LRR 26">
    <location>
        <begin position="749"/>
        <end position="772"/>
    </location>
</feature>
<feature type="domain" description="TIR" evidence="5">
    <location>
        <begin position="866"/>
        <end position="1011"/>
    </location>
</feature>
<feature type="binding site" evidence="1">
    <location>
        <begin position="47"/>
        <end position="51"/>
    </location>
    <ligand>
        <name>DNA</name>
        <dbReference type="ChEBI" id="CHEBI:16991"/>
        <note>CpG-containing DNA</note>
    </ligand>
</feature>
<feature type="binding site" evidence="1">
    <location>
        <begin position="72"/>
        <end position="77"/>
    </location>
    <ligand>
        <name>DNA</name>
        <dbReference type="ChEBI" id="CHEBI:16991"/>
        <note>CpG-containing DNA</note>
    </ligand>
</feature>
<feature type="binding site" evidence="1">
    <location>
        <begin position="95"/>
        <end position="109"/>
    </location>
    <ligand>
        <name>DNA</name>
        <dbReference type="ChEBI" id="CHEBI:16991"/>
        <note>CpG-containing DNA</note>
    </ligand>
</feature>
<feature type="binding site" evidence="1">
    <location>
        <position position="132"/>
    </location>
    <ligand>
        <name>DNA</name>
        <dbReference type="ChEBI" id="CHEBI:16991"/>
        <note>CpG-containing DNA</note>
    </ligand>
</feature>
<feature type="binding site" evidence="1">
    <location>
        <position position="152"/>
    </location>
    <ligand>
        <name>DNA</name>
        <dbReference type="ChEBI" id="CHEBI:16991"/>
        <note>CpG-containing DNA</note>
    </ligand>
</feature>
<feature type="binding site" evidence="1">
    <location>
        <begin position="179"/>
        <end position="181"/>
    </location>
    <ligand>
        <name>DNA</name>
        <dbReference type="ChEBI" id="CHEBI:16991"/>
        <note>CpG-containing DNA</note>
    </ligand>
</feature>
<feature type="binding site" evidence="1">
    <location>
        <position position="208"/>
    </location>
    <ligand>
        <name>DNA</name>
        <dbReference type="ChEBI" id="CHEBI:16991"/>
        <note>CpG-containing DNA</note>
    </ligand>
</feature>
<feature type="binding site" evidence="1">
    <location>
        <position position="262"/>
    </location>
    <ligand>
        <name>DNA</name>
        <dbReference type="ChEBI" id="CHEBI:16991"/>
        <note>CpG-containing DNA</note>
    </ligand>
</feature>
<feature type="lipid moiety-binding region" description="S-palmitoyl cysteine" evidence="3">
    <location>
        <position position="258"/>
    </location>
</feature>
<feature type="lipid moiety-binding region" description="S-palmitoyl cysteine" evidence="3">
    <location>
        <position position="265"/>
    </location>
</feature>
<feature type="glycosylation site" description="N-linked (GlcNAc...) asparagine" evidence="4">
    <location>
        <position position="64"/>
    </location>
</feature>
<feature type="glycosylation site" description="N-linked (GlcNAc...) asparagine" evidence="4">
    <location>
        <position position="129"/>
    </location>
</feature>
<feature type="glycosylation site" description="N-linked (GlcNAc...) asparagine" evidence="4">
    <location>
        <position position="200"/>
    </location>
</feature>
<feature type="glycosylation site" description="N-linked (GlcNAc...) asparagine" evidence="4">
    <location>
        <position position="210"/>
    </location>
</feature>
<feature type="glycosylation site" description="N-linked (GlcNAc...) asparagine" evidence="4">
    <location>
        <position position="242"/>
    </location>
</feature>
<feature type="glycosylation site" description="N-linked (GlcNAc...) asparagine" evidence="4">
    <location>
        <position position="340"/>
    </location>
</feature>
<feature type="glycosylation site" description="N-linked (GlcNAc...) asparagine" evidence="4">
    <location>
        <position position="474"/>
    </location>
</feature>
<feature type="glycosylation site" description="N-linked (GlcNAc...) asparagine" evidence="4">
    <location>
        <position position="513"/>
    </location>
</feature>
<feature type="glycosylation site" description="N-linked (GlcNAc...) asparagine" evidence="4">
    <location>
        <position position="567"/>
    </location>
</feature>
<feature type="glycosylation site" description="N-linked (GlcNAc...) asparagine" evidence="4">
    <location>
        <position position="669"/>
    </location>
</feature>
<feature type="glycosylation site" description="N-linked (GlcNAc...) asparagine" evidence="4">
    <location>
        <position position="694"/>
    </location>
</feature>
<feature type="glycosylation site" description="N-linked (GlcNAc...) asparagine" evidence="4">
    <location>
        <position position="699"/>
    </location>
</feature>
<feature type="glycosylation site" description="N-linked (GlcNAc...) asparagine" evidence="4">
    <location>
        <position position="731"/>
    </location>
</feature>
<feature type="disulfide bond" evidence="1">
    <location>
        <begin position="35"/>
        <end position="45"/>
    </location>
</feature>
<feature type="disulfide bond" evidence="1">
    <location>
        <begin position="98"/>
        <end position="110"/>
    </location>
</feature>
<feature type="disulfide bond" evidence="1">
    <location>
        <begin position="178"/>
        <end position="184"/>
    </location>
</feature>
<feature type="disulfide bond" evidence="1">
    <location>
        <begin position="255"/>
        <end position="268"/>
    </location>
</feature>
<feature type="disulfide bond" evidence="1">
    <location>
        <begin position="258"/>
        <end position="265"/>
    </location>
</feature>
<feature type="disulfide bond" evidence="1">
    <location>
        <begin position="470"/>
        <end position="500"/>
    </location>
</feature>
<feature type="disulfide bond" evidence="1">
    <location>
        <begin position="764"/>
        <end position="790"/>
    </location>
</feature>
<feature type="disulfide bond" evidence="1">
    <location>
        <begin position="766"/>
        <end position="809"/>
    </location>
</feature>
<proteinExistence type="evidence at transcript level"/>
<reference key="1">
    <citation type="submission" date="2002-07" db="EMBL/GenBank/DDBJ databases">
        <title>Feline toll-like receptor 9 (tlr9).</title>
        <authorList>
            <person name="Wernette C.M."/>
            <person name="Smith B.F."/>
            <person name="Baker H.J."/>
        </authorList>
    </citation>
    <scope>NUCLEOTIDE SEQUENCE [MRNA]</scope>
    <source>
        <tissue>Spleen</tissue>
    </source>
</reference>
<reference key="2">
    <citation type="submission" date="2004-12" db="EMBL/GenBank/DDBJ databases">
        <title>Felis catus toll-like receptor 9 mRNA.</title>
        <authorList>
            <person name="Brownlie R."/>
            <person name="Mookherjee N."/>
            <person name="Mutwiri G."/>
            <person name="Babiuk L."/>
            <person name="Hecker R."/>
            <person name="Lipford G."/>
            <person name="Griebel P."/>
        </authorList>
    </citation>
    <scope>NUCLEOTIDE SEQUENCE [MRNA]</scope>
    <source>
        <tissue>Spleen</tissue>
    </source>
</reference>
<organism>
    <name type="scientific">Felis catus</name>
    <name type="common">Cat</name>
    <name type="synonym">Felis silvestris catus</name>
    <dbReference type="NCBI Taxonomy" id="9685"/>
    <lineage>
        <taxon>Eukaryota</taxon>
        <taxon>Metazoa</taxon>
        <taxon>Chordata</taxon>
        <taxon>Craniata</taxon>
        <taxon>Vertebrata</taxon>
        <taxon>Euteleostomi</taxon>
        <taxon>Mammalia</taxon>
        <taxon>Eutheria</taxon>
        <taxon>Laurasiatheria</taxon>
        <taxon>Carnivora</taxon>
        <taxon>Feliformia</taxon>
        <taxon>Felidae</taxon>
        <taxon>Felinae</taxon>
        <taxon>Felis</taxon>
    </lineage>
</organism>
<comment type="function">
    <text evidence="2 3">Key component of innate and adaptive immunity. TLRs (Toll-like receptors) control host immune response against pathogens through recognition of molecular patterns specific to microorganisms. TLR9 is a nucleotide-sensing TLR which is activated by unmethylated cytidine-phosphate-guanosine (CpG) dinucleotides. Acts via MYD88 and TRAF6, leading to NF-kappa-B activation, cytokine secretion and the inflammatory response. Upon CpG stimulation, induces B-cell proliferation, activation, survival and antibody production (By similarity).</text>
</comment>
<comment type="subunit">
    <text evidence="1 2 3">Monomer and homodimer. Exists as a monomer in the absence of unmethylated cytidine-phosphate-guanosine (CpG) ligand. Proteolytic processing of an insertion loop (Z-loop) is required for homodimerization upon binding to the unmethylated CpG ligand leading to its activation (By similarity). Interacts with MYD88 via their respective TIR domains (By similarity). Interacts with BTK (By similarity). Interacts (via transmembrane domain) with UNC93B1. Interacts with CD300LH; the interaction may promote full activation of TLR9-triggered innate responses. Interacts with CNPY3 and HSP90B1; this interaction is required for proper folding in the endoplasmic reticulum. Interacts with SMPDL3B (By similarity). Interacts with CD82; this interaction is essential for TLR9-dependent myddosome formation in response to CpG stimulation (By similarity).</text>
</comment>
<comment type="subcellular location">
    <subcellularLocation>
        <location evidence="2">Endoplasmic reticulum membrane</location>
        <topology evidence="2">Single-pass type I membrane protein</topology>
    </subcellularLocation>
    <subcellularLocation>
        <location evidence="2">Endosome</location>
    </subcellularLocation>
    <subcellularLocation>
        <location evidence="2">Lysosome</location>
    </subcellularLocation>
    <subcellularLocation>
        <location evidence="2">Cytoplasmic vesicle</location>
        <location evidence="2">Phagosome</location>
    </subcellularLocation>
    <text evidence="2">Relocalizes from endoplasmic reticulum to endosome and lysosome upon stimulation with agonist. Exit from the ER requires UNC93B1. Endolysosomal localization is required for proteolytic cleavage and subsequent activation. Intracellular localization of the active receptor may prevent from responding to self nucleic acid.</text>
</comment>
<comment type="PTM">
    <text evidence="2">Activated by proteolytic cleavage of the flexible loop between repeats LRR14 and LRR15 within the ectodomain. Cleavage requires UNC93B1. Proteolytically processed by first removing the majority of the ectodomain by either asparagine endopeptidase (AEP) or a cathepsin followed by a trimming event that is solely cathepsin mediated and required for optimal receptor signaling.</text>
</comment>
<comment type="PTM">
    <text evidence="3">Palmitoylated by ZDHHC3 in the Golgi regulates TLR9 trafficking from the Golgi to endosomes. Depalmitoylation by PPT1 controls the release of TLR9 from UNC93B1 in endosomes.</text>
</comment>
<comment type="similarity">
    <text evidence="6">Belongs to the Toll-like receptor family.</text>
</comment>
<dbReference type="EMBL" id="AY137581">
    <property type="protein sequence ID" value="AAN15751.1"/>
    <property type="molecule type" value="mRNA"/>
</dbReference>
<dbReference type="EMBL" id="AY859724">
    <property type="protein sequence ID" value="AAW50952.1"/>
    <property type="molecule type" value="mRNA"/>
</dbReference>
<dbReference type="RefSeq" id="NP_001009285.1">
    <property type="nucleotide sequence ID" value="NM_001009285.1"/>
</dbReference>
<dbReference type="SMR" id="Q5I2M7"/>
<dbReference type="FunCoup" id="Q5I2M7">
    <property type="interactions" value="22"/>
</dbReference>
<dbReference type="STRING" id="9685.ENSFCAP00000038661"/>
<dbReference type="GlyCosmos" id="Q5I2M7">
    <property type="glycosylation" value="13 sites, No reported glycans"/>
</dbReference>
<dbReference type="GeneID" id="493839"/>
<dbReference type="KEGG" id="fca:493839"/>
<dbReference type="CTD" id="54106"/>
<dbReference type="InParanoid" id="Q5I2M7"/>
<dbReference type="OrthoDB" id="10006997at2759"/>
<dbReference type="TreeFam" id="TF325595"/>
<dbReference type="Proteomes" id="UP000011712">
    <property type="component" value="Unplaced"/>
</dbReference>
<dbReference type="GO" id="GO:0032009">
    <property type="term" value="C:early phagosome"/>
    <property type="evidence" value="ECO:0000250"/>
    <property type="project" value="UniProtKB"/>
</dbReference>
<dbReference type="GO" id="GO:0036019">
    <property type="term" value="C:endolysosome"/>
    <property type="evidence" value="ECO:0000250"/>
    <property type="project" value="UniProtKB"/>
</dbReference>
<dbReference type="GO" id="GO:0005783">
    <property type="term" value="C:endoplasmic reticulum"/>
    <property type="evidence" value="ECO:0000250"/>
    <property type="project" value="UniProtKB"/>
</dbReference>
<dbReference type="GO" id="GO:0005789">
    <property type="term" value="C:endoplasmic reticulum membrane"/>
    <property type="evidence" value="ECO:0007669"/>
    <property type="project" value="UniProtKB-SubCell"/>
</dbReference>
<dbReference type="GO" id="GO:0005768">
    <property type="term" value="C:endosome"/>
    <property type="evidence" value="ECO:0000250"/>
    <property type="project" value="UniProtKB"/>
</dbReference>
<dbReference type="GO" id="GO:0005764">
    <property type="term" value="C:lysosome"/>
    <property type="evidence" value="ECO:0000250"/>
    <property type="project" value="UniProtKB"/>
</dbReference>
<dbReference type="GO" id="GO:0005886">
    <property type="term" value="C:plasma membrane"/>
    <property type="evidence" value="ECO:0000318"/>
    <property type="project" value="GO_Central"/>
</dbReference>
<dbReference type="GO" id="GO:0038187">
    <property type="term" value="F:pattern recognition receptor activity"/>
    <property type="evidence" value="ECO:0000250"/>
    <property type="project" value="UniProtKB"/>
</dbReference>
<dbReference type="GO" id="GO:0042803">
    <property type="term" value="F:protein homodimerization activity"/>
    <property type="evidence" value="ECO:0000250"/>
    <property type="project" value="UniProtKB"/>
</dbReference>
<dbReference type="GO" id="GO:0035197">
    <property type="term" value="F:siRNA binding"/>
    <property type="evidence" value="ECO:0000250"/>
    <property type="project" value="UniProtKB"/>
</dbReference>
<dbReference type="GO" id="GO:0045322">
    <property type="term" value="F:unmethylated CpG binding"/>
    <property type="evidence" value="ECO:0000250"/>
    <property type="project" value="UniProtKB"/>
</dbReference>
<dbReference type="GO" id="GO:0007249">
    <property type="term" value="P:canonical NF-kappaB signal transduction"/>
    <property type="evidence" value="ECO:0000318"/>
    <property type="project" value="GO_Central"/>
</dbReference>
<dbReference type="GO" id="GO:0051607">
    <property type="term" value="P:defense response to virus"/>
    <property type="evidence" value="ECO:0000318"/>
    <property type="project" value="GO_Central"/>
</dbReference>
<dbReference type="GO" id="GO:0006954">
    <property type="term" value="P:inflammatory response"/>
    <property type="evidence" value="ECO:0007669"/>
    <property type="project" value="UniProtKB-KW"/>
</dbReference>
<dbReference type="GO" id="GO:0045087">
    <property type="term" value="P:innate immune response"/>
    <property type="evidence" value="ECO:0007669"/>
    <property type="project" value="UniProtKB-KW"/>
</dbReference>
<dbReference type="GO" id="GO:0050871">
    <property type="term" value="P:positive regulation of B cell activation"/>
    <property type="evidence" value="ECO:0000250"/>
    <property type="project" value="UniProtKB"/>
</dbReference>
<dbReference type="GO" id="GO:0030890">
    <property type="term" value="P:positive regulation of B cell proliferation"/>
    <property type="evidence" value="ECO:0000250"/>
    <property type="project" value="UniProtKB"/>
</dbReference>
<dbReference type="GO" id="GO:0002639">
    <property type="term" value="P:positive regulation of immunoglobulin production"/>
    <property type="evidence" value="ECO:0000250"/>
    <property type="project" value="UniProtKB"/>
</dbReference>
<dbReference type="GO" id="GO:0032727">
    <property type="term" value="P:positive regulation of interferon-alpha production"/>
    <property type="evidence" value="ECO:0000250"/>
    <property type="project" value="UniProtKB"/>
</dbReference>
<dbReference type="GO" id="GO:0032728">
    <property type="term" value="P:positive regulation of interferon-beta production"/>
    <property type="evidence" value="ECO:0000250"/>
    <property type="project" value="UniProtKB"/>
</dbReference>
<dbReference type="GO" id="GO:0032755">
    <property type="term" value="P:positive regulation of interleukin-6 production"/>
    <property type="evidence" value="ECO:0000318"/>
    <property type="project" value="GO_Central"/>
</dbReference>
<dbReference type="GO" id="GO:0043410">
    <property type="term" value="P:positive regulation of MAPK cascade"/>
    <property type="evidence" value="ECO:0000250"/>
    <property type="project" value="UniProtKB"/>
</dbReference>
<dbReference type="GO" id="GO:0034165">
    <property type="term" value="P:positive regulation of toll-like receptor 9 signaling pathway"/>
    <property type="evidence" value="ECO:0000250"/>
    <property type="project" value="UniProtKB"/>
</dbReference>
<dbReference type="GO" id="GO:0032729">
    <property type="term" value="P:positive regulation of type II interferon production"/>
    <property type="evidence" value="ECO:0000250"/>
    <property type="project" value="UniProtKB"/>
</dbReference>
<dbReference type="GO" id="GO:0045577">
    <property type="term" value="P:regulation of B cell differentiation"/>
    <property type="evidence" value="ECO:0000250"/>
    <property type="project" value="UniProtKB"/>
</dbReference>
<dbReference type="GO" id="GO:0002224">
    <property type="term" value="P:toll-like receptor signaling pathway"/>
    <property type="evidence" value="ECO:0000318"/>
    <property type="project" value="GO_Central"/>
</dbReference>
<dbReference type="FunFam" id="3.40.50.10140:FF:000003">
    <property type="entry name" value="Toll-like receptor 7"/>
    <property type="match status" value="1"/>
</dbReference>
<dbReference type="FunFam" id="3.80.10.10:FF:000037">
    <property type="entry name" value="Toll-like receptor 7"/>
    <property type="match status" value="1"/>
</dbReference>
<dbReference type="Gene3D" id="3.80.10.10">
    <property type="entry name" value="Ribonuclease Inhibitor"/>
    <property type="match status" value="1"/>
</dbReference>
<dbReference type="Gene3D" id="3.40.50.10140">
    <property type="entry name" value="Toll/interleukin-1 receptor homology (TIR) domain"/>
    <property type="match status" value="1"/>
</dbReference>
<dbReference type="InterPro" id="IPR001611">
    <property type="entry name" value="Leu-rich_rpt"/>
</dbReference>
<dbReference type="InterPro" id="IPR003591">
    <property type="entry name" value="Leu-rich_rpt_typical-subtyp"/>
</dbReference>
<dbReference type="InterPro" id="IPR041283">
    <property type="entry name" value="LRR_12"/>
</dbReference>
<dbReference type="InterPro" id="IPR032675">
    <property type="entry name" value="LRR_dom_sf"/>
</dbReference>
<dbReference type="InterPro" id="IPR000157">
    <property type="entry name" value="TIR_dom"/>
</dbReference>
<dbReference type="InterPro" id="IPR035897">
    <property type="entry name" value="Toll_tir_struct_dom_sf"/>
</dbReference>
<dbReference type="PANTHER" id="PTHR47410">
    <property type="entry name" value="TOLL-LIKE RECEPTOR 7-RELATED"/>
    <property type="match status" value="1"/>
</dbReference>
<dbReference type="PANTHER" id="PTHR47410:SF3">
    <property type="entry name" value="TOLL-LIKE RECEPTOR 9"/>
    <property type="match status" value="1"/>
</dbReference>
<dbReference type="Pfam" id="PF00560">
    <property type="entry name" value="LRR_1"/>
    <property type="match status" value="1"/>
</dbReference>
<dbReference type="Pfam" id="PF18837">
    <property type="entry name" value="LRR_12"/>
    <property type="match status" value="1"/>
</dbReference>
<dbReference type="Pfam" id="PF13855">
    <property type="entry name" value="LRR_8"/>
    <property type="match status" value="5"/>
</dbReference>
<dbReference type="Pfam" id="PF01582">
    <property type="entry name" value="TIR"/>
    <property type="match status" value="1"/>
</dbReference>
<dbReference type="PRINTS" id="PR00019">
    <property type="entry name" value="LEURICHRPT"/>
</dbReference>
<dbReference type="SMART" id="SM00364">
    <property type="entry name" value="LRR_BAC"/>
    <property type="match status" value="4"/>
</dbReference>
<dbReference type="SMART" id="SM00365">
    <property type="entry name" value="LRR_SD22"/>
    <property type="match status" value="6"/>
</dbReference>
<dbReference type="SMART" id="SM00369">
    <property type="entry name" value="LRR_TYP"/>
    <property type="match status" value="15"/>
</dbReference>
<dbReference type="SMART" id="SM00255">
    <property type="entry name" value="TIR"/>
    <property type="match status" value="1"/>
</dbReference>
<dbReference type="SUPFAM" id="SSF52058">
    <property type="entry name" value="L domain-like"/>
    <property type="match status" value="2"/>
</dbReference>
<dbReference type="SUPFAM" id="SSF52200">
    <property type="entry name" value="Toll/Interleukin receptor TIR domain"/>
    <property type="match status" value="1"/>
</dbReference>
<dbReference type="PROSITE" id="PS51450">
    <property type="entry name" value="LRR"/>
    <property type="match status" value="18"/>
</dbReference>
<dbReference type="PROSITE" id="PS50104">
    <property type="entry name" value="TIR"/>
    <property type="match status" value="1"/>
</dbReference>
<sequence>MGPCHGALHPLSLLVQAAALAVALAQGTLPAFLPCELQRHGLVNCDWLFLKSVPHFSAAAPRGNVTSLSLYSNRIHHLHDSDFVHLSSLRRLNLKWNCPPASLSPMHFPCHMTIEPHTFLAVPTLEELNLSYNSITTVPALPSSLVSLSLSRTNILVLDPANLAGLHSLRFLFLDGNCYYKNPCPQALQVAPGALLGLGNLTHLSLKYNNLTAVPRGLPPSLEYLLLSYNHIITLAPEDLANLTALRVLDVGGNCRRCDHARNPCMECPKGFPHLHPDTFSHLNHLEGLVLKDSSLYNLNPRWFHALGNLMVLDLSENFLYDCITKTTAFQGLAQLRRLNLSFNYHKKVSFAHLHLAPSFGSLLSLQQLDMHGIFFRSLSETTLRSLVHLPMLQSLHLQMNFINQAQLSIFGAFPGLRYVDLSDNRISGAMELAAATGEVDGGERVRLPSGDLALGPPGTPSSEGFMPGCKTLNFTLDLSRNNLVTIQPEMFARLSRLQCLLLSRNSISQAVNGSQFMPLTSLQVLDLSHNKLDLYHGRSFTELPRLEALDLSYNSQPFSMQGVGHNLSFVAQLPALRYLSLAHNDIHSRVSQQLCSASLRALDFSGNALSRMWAEGDLYLHFFRGLRSLVRLDLSQNRLHTLLPRTLDNLPKSLRLLRLRDNYLAFFNWSSLVLLPRLEALDLAGNQLKALSNGSLPNGTQLQRLDLSSNSISFVASSFFALATRLRELNLSANALKTVEPSWFGSLAGTLKVLDVTGNPLHCACGAAFVDFLLEVQAAVPGLPGHVKCGSPGQLQGRSIFAQDLRLCLDEALSWDCFGLSLLTVALGLAVPMLHHLCGWDLWYCFHLCLAWLPRRGRRRGADALPYDAFVVFDKAQSAVADWVYNELRVRLEERRGRRALRLCLEERDWLPGKTLFENLWASVYSSRKMLFVLAHTDRVSGLLRASFLLAQQRLLEDRKDVVVLVILRPDAHRSRYVRLRQRLCRQSVLLWPHQPSGQRSFWAQLGTALTRDNQHFYNQNFCRGPTTAE</sequence>
<protein>
    <recommendedName>
        <fullName>Toll-like receptor 9</fullName>
    </recommendedName>
    <cdAntigenName>CD289</cdAntigenName>
</protein>
<keyword id="KW-0968">Cytoplasmic vesicle</keyword>
<keyword id="KW-1015">Disulfide bond</keyword>
<keyword id="KW-0256">Endoplasmic reticulum</keyword>
<keyword id="KW-0967">Endosome</keyword>
<keyword id="KW-0325">Glycoprotein</keyword>
<keyword id="KW-0391">Immunity</keyword>
<keyword id="KW-0395">Inflammatory response</keyword>
<keyword id="KW-0399">Innate immunity</keyword>
<keyword id="KW-0433">Leucine-rich repeat</keyword>
<keyword id="KW-0449">Lipoprotein</keyword>
<keyword id="KW-0458">Lysosome</keyword>
<keyword id="KW-0472">Membrane</keyword>
<keyword id="KW-0564">Palmitate</keyword>
<keyword id="KW-0675">Receptor</keyword>
<keyword id="KW-1185">Reference proteome</keyword>
<keyword id="KW-0677">Repeat</keyword>
<keyword id="KW-0732">Signal</keyword>
<keyword id="KW-0812">Transmembrane</keyword>
<keyword id="KW-1133">Transmembrane helix</keyword>
<gene>
    <name type="primary">TLR9</name>
</gene>